<dbReference type="EMBL" id="CU928158">
    <property type="protein sequence ID" value="CAQ88022.1"/>
    <property type="molecule type" value="Genomic_DNA"/>
</dbReference>
<dbReference type="RefSeq" id="WP_000256450.1">
    <property type="nucleotide sequence ID" value="NC_011740.1"/>
</dbReference>
<dbReference type="SMR" id="B7LUW4"/>
<dbReference type="GeneID" id="93774459"/>
<dbReference type="KEGG" id="efe:EFER_0463"/>
<dbReference type="HOGENOM" id="CLU_100590_5_1_6"/>
<dbReference type="OrthoDB" id="9807878at2"/>
<dbReference type="Proteomes" id="UP000000745">
    <property type="component" value="Chromosome"/>
</dbReference>
<dbReference type="GO" id="GO:0005737">
    <property type="term" value="C:cytoplasm"/>
    <property type="evidence" value="ECO:0007669"/>
    <property type="project" value="UniProtKB-ARBA"/>
</dbReference>
<dbReference type="GO" id="GO:0015935">
    <property type="term" value="C:small ribosomal subunit"/>
    <property type="evidence" value="ECO:0007669"/>
    <property type="project" value="TreeGrafter"/>
</dbReference>
<dbReference type="GO" id="GO:0003735">
    <property type="term" value="F:structural constituent of ribosome"/>
    <property type="evidence" value="ECO:0007669"/>
    <property type="project" value="InterPro"/>
</dbReference>
<dbReference type="GO" id="GO:0006412">
    <property type="term" value="P:translation"/>
    <property type="evidence" value="ECO:0007669"/>
    <property type="project" value="UniProtKB-UniRule"/>
</dbReference>
<dbReference type="FunFam" id="3.30.1320.10:FF:000001">
    <property type="entry name" value="30S ribosomal protein S16"/>
    <property type="match status" value="1"/>
</dbReference>
<dbReference type="Gene3D" id="3.30.1320.10">
    <property type="match status" value="1"/>
</dbReference>
<dbReference type="HAMAP" id="MF_00385">
    <property type="entry name" value="Ribosomal_bS16"/>
    <property type="match status" value="1"/>
</dbReference>
<dbReference type="InterPro" id="IPR000307">
    <property type="entry name" value="Ribosomal_bS16"/>
</dbReference>
<dbReference type="InterPro" id="IPR020592">
    <property type="entry name" value="Ribosomal_bS16_CS"/>
</dbReference>
<dbReference type="InterPro" id="IPR023803">
    <property type="entry name" value="Ribosomal_bS16_dom_sf"/>
</dbReference>
<dbReference type="NCBIfam" id="TIGR00002">
    <property type="entry name" value="S16"/>
    <property type="match status" value="1"/>
</dbReference>
<dbReference type="PANTHER" id="PTHR12919">
    <property type="entry name" value="30S RIBOSOMAL PROTEIN S16"/>
    <property type="match status" value="1"/>
</dbReference>
<dbReference type="PANTHER" id="PTHR12919:SF20">
    <property type="entry name" value="SMALL RIBOSOMAL SUBUNIT PROTEIN BS16M"/>
    <property type="match status" value="1"/>
</dbReference>
<dbReference type="Pfam" id="PF00886">
    <property type="entry name" value="Ribosomal_S16"/>
    <property type="match status" value="1"/>
</dbReference>
<dbReference type="SUPFAM" id="SSF54565">
    <property type="entry name" value="Ribosomal protein S16"/>
    <property type="match status" value="1"/>
</dbReference>
<dbReference type="PROSITE" id="PS00732">
    <property type="entry name" value="RIBOSOMAL_S16"/>
    <property type="match status" value="1"/>
</dbReference>
<proteinExistence type="inferred from homology"/>
<protein>
    <recommendedName>
        <fullName evidence="1">Small ribosomal subunit protein bS16</fullName>
    </recommendedName>
    <alternativeName>
        <fullName evidence="2">30S ribosomal protein S16</fullName>
    </alternativeName>
</protein>
<organism>
    <name type="scientific">Escherichia fergusonii (strain ATCC 35469 / DSM 13698 / CCUG 18766 / IAM 14443 / JCM 21226 / LMG 7866 / NBRC 102419 / NCTC 12128 / CDC 0568-73)</name>
    <dbReference type="NCBI Taxonomy" id="585054"/>
    <lineage>
        <taxon>Bacteria</taxon>
        <taxon>Pseudomonadati</taxon>
        <taxon>Pseudomonadota</taxon>
        <taxon>Gammaproteobacteria</taxon>
        <taxon>Enterobacterales</taxon>
        <taxon>Enterobacteriaceae</taxon>
        <taxon>Escherichia</taxon>
    </lineage>
</organism>
<accession>B7LUW4</accession>
<sequence length="82" mass="9191">MVTIRLARHGAKKRPFYQVVVADSRNARNGRFIERVGFFNPIASEKEEGTRLDLDRIAHWVGQGATISDRVAALIKEVNKAA</sequence>
<comment type="similarity">
    <text evidence="1">Belongs to the bacterial ribosomal protein bS16 family.</text>
</comment>
<feature type="chain" id="PRO_1000196406" description="Small ribosomal subunit protein bS16">
    <location>
        <begin position="1"/>
        <end position="82"/>
    </location>
</feature>
<evidence type="ECO:0000255" key="1">
    <source>
        <dbReference type="HAMAP-Rule" id="MF_00385"/>
    </source>
</evidence>
<evidence type="ECO:0000305" key="2"/>
<name>RS16_ESCF3</name>
<reference key="1">
    <citation type="journal article" date="2009" name="PLoS Genet.">
        <title>Organised genome dynamics in the Escherichia coli species results in highly diverse adaptive paths.</title>
        <authorList>
            <person name="Touchon M."/>
            <person name="Hoede C."/>
            <person name="Tenaillon O."/>
            <person name="Barbe V."/>
            <person name="Baeriswyl S."/>
            <person name="Bidet P."/>
            <person name="Bingen E."/>
            <person name="Bonacorsi S."/>
            <person name="Bouchier C."/>
            <person name="Bouvet O."/>
            <person name="Calteau A."/>
            <person name="Chiapello H."/>
            <person name="Clermont O."/>
            <person name="Cruveiller S."/>
            <person name="Danchin A."/>
            <person name="Diard M."/>
            <person name="Dossat C."/>
            <person name="Karoui M.E."/>
            <person name="Frapy E."/>
            <person name="Garry L."/>
            <person name="Ghigo J.M."/>
            <person name="Gilles A.M."/>
            <person name="Johnson J."/>
            <person name="Le Bouguenec C."/>
            <person name="Lescat M."/>
            <person name="Mangenot S."/>
            <person name="Martinez-Jehanne V."/>
            <person name="Matic I."/>
            <person name="Nassif X."/>
            <person name="Oztas S."/>
            <person name="Petit M.A."/>
            <person name="Pichon C."/>
            <person name="Rouy Z."/>
            <person name="Ruf C.S."/>
            <person name="Schneider D."/>
            <person name="Tourret J."/>
            <person name="Vacherie B."/>
            <person name="Vallenet D."/>
            <person name="Medigue C."/>
            <person name="Rocha E.P.C."/>
            <person name="Denamur E."/>
        </authorList>
    </citation>
    <scope>NUCLEOTIDE SEQUENCE [LARGE SCALE GENOMIC DNA]</scope>
    <source>
        <strain>ATCC 35469 / DSM 13698 / BCRC 15582 / CCUG 18766 / IAM 14443 / JCM 21226 / LMG 7866 / NBRC 102419 / NCTC 12128 / CDC 0568-73</strain>
    </source>
</reference>
<gene>
    <name evidence="1" type="primary">rpsP</name>
    <name type="ordered locus">EFER_0463</name>
</gene>
<keyword id="KW-0687">Ribonucleoprotein</keyword>
<keyword id="KW-0689">Ribosomal protein</keyword>